<keyword id="KW-0004">4Fe-4S</keyword>
<keyword id="KW-0249">Electron transport</keyword>
<keyword id="KW-0408">Iron</keyword>
<keyword id="KW-0411">Iron-sulfur</keyword>
<keyword id="KW-0479">Metal-binding</keyword>
<keyword id="KW-0560">Oxidoreductase</keyword>
<keyword id="KW-1185">Reference proteome</keyword>
<keyword id="KW-0677">Repeat</keyword>
<keyword id="KW-0813">Transport</keyword>
<proteinExistence type="inferred from homology"/>
<accession>Q58136</accession>
<organism>
    <name type="scientific">Methanocaldococcus jannaschii (strain ATCC 43067 / DSM 2661 / JAL-1 / JCM 10045 / NBRC 100440)</name>
    <name type="common">Methanococcus jannaschii</name>
    <dbReference type="NCBI Taxonomy" id="243232"/>
    <lineage>
        <taxon>Archaea</taxon>
        <taxon>Methanobacteriati</taxon>
        <taxon>Methanobacteriota</taxon>
        <taxon>Methanomada group</taxon>
        <taxon>Methanococci</taxon>
        <taxon>Methanococcales</taxon>
        <taxon>Methanocaldococcaceae</taxon>
        <taxon>Methanocaldococcus</taxon>
    </lineage>
</organism>
<comment type="similarity">
    <text evidence="3">Belongs to the FrhG family.</text>
</comment>
<protein>
    <recommendedName>
        <fullName>Uncharacterized protein MJ0726</fullName>
    </recommendedName>
</protein>
<reference key="1">
    <citation type="journal article" date="1996" name="Science">
        <title>Complete genome sequence of the methanogenic archaeon, Methanococcus jannaschii.</title>
        <authorList>
            <person name="Bult C.J."/>
            <person name="White O."/>
            <person name="Olsen G.J."/>
            <person name="Zhou L."/>
            <person name="Fleischmann R.D."/>
            <person name="Sutton G.G."/>
            <person name="Blake J.A."/>
            <person name="FitzGerald L.M."/>
            <person name="Clayton R.A."/>
            <person name="Gocayne J.D."/>
            <person name="Kerlavage A.R."/>
            <person name="Dougherty B.A."/>
            <person name="Tomb J.-F."/>
            <person name="Adams M.D."/>
            <person name="Reich C.I."/>
            <person name="Overbeek R."/>
            <person name="Kirkness E.F."/>
            <person name="Weinstock K.G."/>
            <person name="Merrick J.M."/>
            <person name="Glodek A."/>
            <person name="Scott J.L."/>
            <person name="Geoghagen N.S.M."/>
            <person name="Weidman J.F."/>
            <person name="Fuhrmann J.L."/>
            <person name="Nguyen D."/>
            <person name="Utterback T.R."/>
            <person name="Kelley J.M."/>
            <person name="Peterson J.D."/>
            <person name="Sadow P.W."/>
            <person name="Hanna M.C."/>
            <person name="Cotton M.D."/>
            <person name="Roberts K.M."/>
            <person name="Hurst M.A."/>
            <person name="Kaine B.P."/>
            <person name="Borodovsky M."/>
            <person name="Klenk H.-P."/>
            <person name="Fraser C.M."/>
            <person name="Smith H.O."/>
            <person name="Woese C.R."/>
            <person name="Venter J.C."/>
        </authorList>
    </citation>
    <scope>NUCLEOTIDE SEQUENCE [LARGE SCALE GENOMIC DNA]</scope>
    <source>
        <strain>ATCC 43067 / DSM 2661 / JAL-1 / JCM 10045 / NBRC 100440</strain>
    </source>
</reference>
<gene>
    <name type="ordered locus">MJ0726</name>
</gene>
<evidence type="ECO:0000255" key="1"/>
<evidence type="ECO:0000255" key="2">
    <source>
        <dbReference type="PROSITE-ProRule" id="PRU00711"/>
    </source>
</evidence>
<evidence type="ECO:0000305" key="3"/>
<dbReference type="EMBL" id="L77117">
    <property type="protein sequence ID" value="AAB98722.1"/>
    <property type="molecule type" value="Genomic_DNA"/>
</dbReference>
<dbReference type="PIR" id="F64390">
    <property type="entry name" value="F64390"/>
</dbReference>
<dbReference type="RefSeq" id="WP_010870231.1">
    <property type="nucleotide sequence ID" value="NC_000909.1"/>
</dbReference>
<dbReference type="SMR" id="Q58136"/>
<dbReference type="STRING" id="243232.MJ_0726"/>
<dbReference type="PaxDb" id="243232-MJ_0726"/>
<dbReference type="EnsemblBacteria" id="AAB98722">
    <property type="protein sequence ID" value="AAB98722"/>
    <property type="gene ID" value="MJ_0726"/>
</dbReference>
<dbReference type="GeneID" id="1451603"/>
<dbReference type="KEGG" id="mja:MJ_0726"/>
<dbReference type="eggNOG" id="arCOG02473">
    <property type="taxonomic scope" value="Archaea"/>
</dbReference>
<dbReference type="HOGENOM" id="CLU_075477_0_0_2"/>
<dbReference type="InParanoid" id="Q58136"/>
<dbReference type="OrthoDB" id="38261at2157"/>
<dbReference type="PhylomeDB" id="Q58136"/>
<dbReference type="Proteomes" id="UP000000805">
    <property type="component" value="Chromosome"/>
</dbReference>
<dbReference type="GO" id="GO:0051539">
    <property type="term" value="F:4 iron, 4 sulfur cluster binding"/>
    <property type="evidence" value="ECO:0007669"/>
    <property type="project" value="UniProtKB-KW"/>
</dbReference>
<dbReference type="GO" id="GO:0046872">
    <property type="term" value="F:metal ion binding"/>
    <property type="evidence" value="ECO:0007669"/>
    <property type="project" value="UniProtKB-KW"/>
</dbReference>
<dbReference type="GO" id="GO:0016491">
    <property type="term" value="F:oxidoreductase activity"/>
    <property type="evidence" value="ECO:0007669"/>
    <property type="project" value="UniProtKB-KW"/>
</dbReference>
<dbReference type="Gene3D" id="3.30.70.20">
    <property type="match status" value="1"/>
</dbReference>
<dbReference type="Gene3D" id="3.40.50.700">
    <property type="entry name" value="NADH:ubiquinone oxidoreductase-like, 20kDa subunit"/>
    <property type="match status" value="1"/>
</dbReference>
<dbReference type="InterPro" id="IPR017896">
    <property type="entry name" value="4Fe4S_Fe-S-bd"/>
</dbReference>
<dbReference type="InterPro" id="IPR017900">
    <property type="entry name" value="4Fe4S_Fe_S_CS"/>
</dbReference>
<dbReference type="InterPro" id="IPR051349">
    <property type="entry name" value="Hydrogenase_assoc-protein"/>
</dbReference>
<dbReference type="InterPro" id="IPR006137">
    <property type="entry name" value="NADH_UbQ_OxRdtase-like_20kDa"/>
</dbReference>
<dbReference type="InterPro" id="IPR037024">
    <property type="entry name" value="NiFe_Hase_small_N_sf"/>
</dbReference>
<dbReference type="PANTHER" id="PTHR42845">
    <property type="entry name" value="COENZYME F420-REDUCING HYDROGENASE, GAMMA SUBUNIT"/>
    <property type="match status" value="1"/>
</dbReference>
<dbReference type="PANTHER" id="PTHR42845:SF2">
    <property type="entry name" value="F420-NON-REDUCING HYDROGENASE VHU SUBUNIT G"/>
    <property type="match status" value="1"/>
</dbReference>
<dbReference type="Pfam" id="PF00037">
    <property type="entry name" value="Fer4"/>
    <property type="match status" value="1"/>
</dbReference>
<dbReference type="Pfam" id="PF01058">
    <property type="entry name" value="Oxidored_q6"/>
    <property type="match status" value="1"/>
</dbReference>
<dbReference type="SUPFAM" id="SSF56770">
    <property type="entry name" value="HydA/Nqo6-like"/>
    <property type="match status" value="1"/>
</dbReference>
<dbReference type="PROSITE" id="PS00198">
    <property type="entry name" value="4FE4S_FER_1"/>
    <property type="match status" value="1"/>
</dbReference>
<dbReference type="PROSITE" id="PS51379">
    <property type="entry name" value="4FE4S_FER_2"/>
    <property type="match status" value="2"/>
</dbReference>
<feature type="chain" id="PRO_0000159235" description="Uncharacterized protein MJ0726">
    <location>
        <begin position="1"/>
        <end position="216"/>
    </location>
</feature>
<feature type="domain" description="4Fe-4S ferredoxin-type 1" evidence="2">
    <location>
        <begin position="160"/>
        <end position="189"/>
    </location>
</feature>
<feature type="domain" description="4Fe-4S ferredoxin-type 2" evidence="2">
    <location>
        <begin position="188"/>
        <end position="216"/>
    </location>
</feature>
<feature type="binding site" evidence="1">
    <location>
        <position position="169"/>
    </location>
    <ligand>
        <name>[4Fe-4S] cluster</name>
        <dbReference type="ChEBI" id="CHEBI:49883"/>
        <label>1</label>
    </ligand>
</feature>
<feature type="binding site" evidence="1">
    <location>
        <position position="172"/>
    </location>
    <ligand>
        <name>[4Fe-4S] cluster</name>
        <dbReference type="ChEBI" id="CHEBI:49883"/>
        <label>1</label>
    </ligand>
</feature>
<feature type="binding site" evidence="1">
    <location>
        <position position="175"/>
    </location>
    <ligand>
        <name>[4Fe-4S] cluster</name>
        <dbReference type="ChEBI" id="CHEBI:49883"/>
        <label>1</label>
    </ligand>
</feature>
<feature type="binding site" evidence="1">
    <location>
        <position position="179"/>
    </location>
    <ligand>
        <name>[4Fe-4S] cluster</name>
        <dbReference type="ChEBI" id="CHEBI:49883"/>
        <label>2</label>
    </ligand>
</feature>
<feature type="binding site" evidence="1">
    <location>
        <position position="197"/>
    </location>
    <ligand>
        <name>[4Fe-4S] cluster</name>
        <dbReference type="ChEBI" id="CHEBI:49883"/>
        <label>2</label>
    </ligand>
</feature>
<feature type="binding site" evidence="1">
    <location>
        <position position="200"/>
    </location>
    <ligand>
        <name>[4Fe-4S] cluster</name>
        <dbReference type="ChEBI" id="CHEBI:49883"/>
        <label>2</label>
    </ligand>
</feature>
<feature type="binding site" evidence="1">
    <location>
        <position position="203"/>
    </location>
    <ligand>
        <name>[4Fe-4S] cluster</name>
        <dbReference type="ChEBI" id="CHEBI:49883"/>
        <label>2</label>
    </ligand>
</feature>
<feature type="binding site" evidence="1">
    <location>
        <position position="207"/>
    </location>
    <ligand>
        <name>[4Fe-4S] cluster</name>
        <dbReference type="ChEBI" id="CHEBI:49883"/>
        <label>1</label>
    </ligand>
</feature>
<sequence length="216" mass="23789">MTGCGSCGKIIKNIEKKYYNQLKEKDIVLVGGAVNLDDEEEVKKIMEIRKNSKVLIAVGSCAVSGGFQRMLIGLENGFPQRFVRIGDVVKVDYAIIGCPPDEEEVERIVKAVIEKDKEIVDSYLILKPYEVIAGKPIIDAYMKVNDVLLTSNKELCLGCDDKPINDEFCTGCGTCVAKCPANALTIDEKPKVNISKCIKCGTCFFNCIRVKEALLP</sequence>
<name>Y726_METJA</name>